<accession>Q5R4L9</accession>
<organism>
    <name type="scientific">Pongo abelii</name>
    <name type="common">Sumatran orangutan</name>
    <name type="synonym">Pongo pygmaeus abelii</name>
    <dbReference type="NCBI Taxonomy" id="9601"/>
    <lineage>
        <taxon>Eukaryota</taxon>
        <taxon>Metazoa</taxon>
        <taxon>Chordata</taxon>
        <taxon>Craniata</taxon>
        <taxon>Vertebrata</taxon>
        <taxon>Euteleostomi</taxon>
        <taxon>Mammalia</taxon>
        <taxon>Eutheria</taxon>
        <taxon>Euarchontoglires</taxon>
        <taxon>Primates</taxon>
        <taxon>Haplorrhini</taxon>
        <taxon>Catarrhini</taxon>
        <taxon>Hominidae</taxon>
        <taxon>Pongo</taxon>
    </lineage>
</organism>
<protein>
    <recommendedName>
        <fullName>Synaptic vesicle glycoprotein 2A</fullName>
    </recommendedName>
</protein>
<proteinExistence type="evidence at transcript level"/>
<sequence length="742" mass="82592">MEEGFRDRAAFIRGAKDIAKEVKKHAAKKVVKGLDRVQDEYSRRSYSRFEEEDDDDDFPAPSDGYYRGEGTQDEEEGGASSDATEGHDEDDEIYEGEYQGIPGAESGGKGERMADGAPLAGVRGGLSDGEGPPGGRGEAQRRKEREELAQQYEAILRECSHGRFQWTLYFVLGLALMADGVEVFVVGFVLPSAEKDMCLSDSNKGMLGLIVYLGMMVGAFLWGGLADRLGRRQCLLISLSVNSVFAFFSSFVQGYGTFLFCRLLSGVGIGGSIPIVFSYFSEFLAQEKRGEHLSWLCMFWMIGGVYAAAMAWAIIPHYGWSFQMGSAYQFHSWRVFVLVCAFPSVFAIGALTTQPESPRFFLENGKHDEAWMVLKQVHDTNMRAKGHPERVFSVTHIKTIHQEDELIEIQSDTGTWYQRWGVRALSLGGQVWGNFLSCFGPEYRRITLMMMGVWFTMSFSYYGLTVWFPDMIRHLQAVDYASRTKVFPGERVEHVTFNFTLENQIHRGGQYLNDKFIGLRLKSVSFEDSLFEECYFEDVTSSNTFFRNCTFINTVFYNTDLFEYKFVNSRLINSTFLHNKEGCPLDVTGTGEGAYMVYFVSFLGTLAVLPGNIVSALLMDKIGRLRMLAGSSVMSCVSCFFLSFGNSESAMIALLCLFGGVSIASWNALDVLTVELYPSDKRTTAFGFLNALCKLAAVLGISIFTSFVGITKAAPILFASAALALGSSLALKLPETRGQVLQ</sequence>
<feature type="chain" id="PRO_0000239767" description="Synaptic vesicle glycoprotein 2A">
    <location>
        <begin position="1"/>
        <end position="742"/>
    </location>
</feature>
<feature type="topological domain" description="Cytoplasmic" evidence="5">
    <location>
        <begin position="1"/>
        <end position="169"/>
    </location>
</feature>
<feature type="transmembrane region" description="Helical" evidence="5">
    <location>
        <begin position="170"/>
        <end position="190"/>
    </location>
</feature>
<feature type="topological domain" description="Extracellular" evidence="5">
    <location>
        <begin position="191"/>
        <end position="205"/>
    </location>
</feature>
<feature type="transmembrane region" description="Helical" evidence="5">
    <location>
        <begin position="206"/>
        <end position="226"/>
    </location>
</feature>
<feature type="topological domain" description="Cytoplasmic" evidence="5">
    <location>
        <begin position="227"/>
        <end position="233"/>
    </location>
</feature>
<feature type="transmembrane region" description="Helical" evidence="5">
    <location>
        <begin position="234"/>
        <end position="254"/>
    </location>
</feature>
<feature type="topological domain" description="Extracellular" evidence="5">
    <location>
        <begin position="255"/>
        <end position="262"/>
    </location>
</feature>
<feature type="transmembrane region" description="Helical" evidence="5">
    <location>
        <begin position="263"/>
        <end position="283"/>
    </location>
</feature>
<feature type="topological domain" description="Cytoplasmic" evidence="5">
    <location>
        <begin position="284"/>
        <end position="294"/>
    </location>
</feature>
<feature type="transmembrane region" description="Helical" evidence="5">
    <location>
        <begin position="295"/>
        <end position="315"/>
    </location>
</feature>
<feature type="topological domain" description="Extracellular" evidence="5">
    <location>
        <begin position="316"/>
        <end position="334"/>
    </location>
</feature>
<feature type="transmembrane region" description="Helical" evidence="5">
    <location>
        <begin position="335"/>
        <end position="355"/>
    </location>
</feature>
<feature type="topological domain" description="Cytoplasmic" evidence="5">
    <location>
        <begin position="356"/>
        <end position="447"/>
    </location>
</feature>
<feature type="transmembrane region" description="Helical" evidence="5">
    <location>
        <begin position="448"/>
        <end position="468"/>
    </location>
</feature>
<feature type="topological domain" description="Extracellular" evidence="5">
    <location>
        <begin position="469"/>
        <end position="598"/>
    </location>
</feature>
<feature type="transmembrane region" description="Helical" evidence="5">
    <location>
        <begin position="599"/>
        <end position="619"/>
    </location>
</feature>
<feature type="topological domain" description="Cytoplasmic" evidence="5">
    <location>
        <begin position="620"/>
        <end position="626"/>
    </location>
</feature>
<feature type="transmembrane region" description="Helical" evidence="5">
    <location>
        <begin position="627"/>
        <end position="647"/>
    </location>
</feature>
<feature type="topological domain" description="Extracellular" evidence="5">
    <location>
        <begin position="648"/>
        <end position="651"/>
    </location>
</feature>
<feature type="transmembrane region" description="Helical" evidence="5">
    <location>
        <begin position="652"/>
        <end position="672"/>
    </location>
</feature>
<feature type="topological domain" description="Cytoplasmic" evidence="5">
    <location>
        <begin position="673"/>
        <end position="685"/>
    </location>
</feature>
<feature type="transmembrane region" description="Helical" evidence="5">
    <location>
        <begin position="686"/>
        <end position="708"/>
    </location>
</feature>
<feature type="topological domain" description="Extracellular" evidence="5">
    <location>
        <begin position="709"/>
        <end position="712"/>
    </location>
</feature>
<feature type="transmembrane region" description="Helical" evidence="5">
    <location>
        <begin position="713"/>
        <end position="731"/>
    </location>
</feature>
<feature type="topological domain" description="Cytoplasmic" evidence="5">
    <location>
        <begin position="732"/>
        <end position="742"/>
    </location>
</feature>
<feature type="region of interest" description="Interaction with SYT1" evidence="1">
    <location>
        <begin position="1"/>
        <end position="57"/>
    </location>
</feature>
<feature type="region of interest" description="Disordered" evidence="6">
    <location>
        <begin position="40"/>
        <end position="144"/>
    </location>
</feature>
<feature type="compositionally biased region" description="Basic and acidic residues" evidence="6">
    <location>
        <begin position="40"/>
        <end position="49"/>
    </location>
</feature>
<feature type="compositionally biased region" description="Gly residues" evidence="6">
    <location>
        <begin position="122"/>
        <end position="137"/>
    </location>
</feature>
<feature type="modified residue" description="Phosphoserine" evidence="3">
    <location>
        <position position="80"/>
    </location>
</feature>
<feature type="modified residue" description="Phosphoserine" evidence="3">
    <location>
        <position position="81"/>
    </location>
</feature>
<feature type="modified residue" description="Phosphothreonine" evidence="3">
    <location>
        <position position="84"/>
    </location>
</feature>
<feature type="modified residue" description="Phosphoserine" evidence="4">
    <location>
        <position position="127"/>
    </location>
</feature>
<feature type="modified residue" description="Phosphoserine" evidence="2">
    <location>
        <position position="393"/>
    </location>
</feature>
<feature type="modified residue" description="Phosphotyrosine" evidence="4">
    <location>
        <position position="480"/>
    </location>
</feature>
<feature type="glycosylation site" description="N-linked (GlcNAc...) asparagine" evidence="5">
    <location>
        <position position="498"/>
    </location>
</feature>
<feature type="glycosylation site" description="N-linked (GlcNAc...) asparagine" evidence="5">
    <location>
        <position position="548"/>
    </location>
</feature>
<feature type="glycosylation site" description="N-linked (GlcNAc...) asparagine" evidence="5">
    <location>
        <position position="573"/>
    </location>
</feature>
<comment type="function">
    <text evidence="1">Plays a role in the control of regulated secretion in neural and endocrine cells, enhancing selectively low-frequency neurotransmission. Positively regulates vesicle fusion by maintaining the readily releasable pool of secretory vesicles (By similarity).</text>
</comment>
<comment type="subunit">
    <text evidence="1">Interacts with SYT1/synaptotagmin-1 in a calcium-dependent manner. Binds the adapter protein complex AP-2 (By similarity).</text>
</comment>
<comment type="subcellular location">
    <subcellularLocation>
        <location evidence="4">Presynapse</location>
    </subcellularLocation>
    <subcellularLocation>
        <location evidence="2">Cytoplasmic vesicle</location>
        <location evidence="2">Secretory vesicle</location>
        <location evidence="2">Synaptic vesicle membrane</location>
        <topology evidence="2">Multi-pass membrane protein</topology>
    </subcellularLocation>
    <text evidence="2 4">Enriched in chromaffin granules, not present in adrenal microsomes. Associated with both insulin granules and synaptic-like microvesicles in insulin-secreting cells of the pancreas (By similarity). Colocalizes with ATP2B1 at photoreceptor synaptic terminals.</text>
</comment>
<comment type="PTM">
    <text evidence="1">Phosphorylation by CK1 of the N-terminal cytoplasmic domain regulates interaction with SYT1.</text>
</comment>
<comment type="PTM">
    <text evidence="1">N-glycosylated.</text>
</comment>
<comment type="similarity">
    <text evidence="7">Belongs to the major facilitator superfamily.</text>
</comment>
<keyword id="KW-0966">Cell projection</keyword>
<keyword id="KW-0968">Cytoplasmic vesicle</keyword>
<keyword id="KW-0325">Glycoprotein</keyword>
<keyword id="KW-0472">Membrane</keyword>
<keyword id="KW-0532">Neurotransmitter transport</keyword>
<keyword id="KW-0597">Phosphoprotein</keyword>
<keyword id="KW-1185">Reference proteome</keyword>
<keyword id="KW-0770">Synapse</keyword>
<keyword id="KW-0812">Transmembrane</keyword>
<keyword id="KW-1133">Transmembrane helix</keyword>
<keyword id="KW-0813">Transport</keyword>
<gene>
    <name type="primary">SV2A</name>
</gene>
<name>SV2A_PONAB</name>
<reference key="1">
    <citation type="submission" date="2004-11" db="EMBL/GenBank/DDBJ databases">
        <authorList>
            <consortium name="The German cDNA consortium"/>
        </authorList>
    </citation>
    <scope>NUCLEOTIDE SEQUENCE [LARGE SCALE MRNA]</scope>
    <source>
        <tissue>Brain cortex</tissue>
    </source>
</reference>
<dbReference type="EMBL" id="CR861227">
    <property type="protein sequence ID" value="CAH93297.1"/>
    <property type="molecule type" value="mRNA"/>
</dbReference>
<dbReference type="RefSeq" id="NP_001126941.1">
    <property type="nucleotide sequence ID" value="NM_001133469.1"/>
</dbReference>
<dbReference type="SMR" id="Q5R4L9"/>
<dbReference type="FunCoup" id="Q5R4L9">
    <property type="interactions" value="1076"/>
</dbReference>
<dbReference type="STRING" id="9601.ENSPPYP00000001066"/>
<dbReference type="GlyCosmos" id="Q5R4L9">
    <property type="glycosylation" value="3 sites, No reported glycans"/>
</dbReference>
<dbReference type="GeneID" id="100173959"/>
<dbReference type="KEGG" id="pon:100173959"/>
<dbReference type="CTD" id="9900"/>
<dbReference type="eggNOG" id="KOG0255">
    <property type="taxonomic scope" value="Eukaryota"/>
</dbReference>
<dbReference type="InParanoid" id="Q5R4L9"/>
<dbReference type="OrthoDB" id="433512at2759"/>
<dbReference type="Proteomes" id="UP000001595">
    <property type="component" value="Unplaced"/>
</dbReference>
<dbReference type="GO" id="GO:0043005">
    <property type="term" value="C:neuron projection"/>
    <property type="evidence" value="ECO:0007669"/>
    <property type="project" value="TreeGrafter"/>
</dbReference>
<dbReference type="GO" id="GO:0005886">
    <property type="term" value="C:plasma membrane"/>
    <property type="evidence" value="ECO:0007669"/>
    <property type="project" value="UniProtKB-ARBA"/>
</dbReference>
<dbReference type="GO" id="GO:0030672">
    <property type="term" value="C:synaptic vesicle membrane"/>
    <property type="evidence" value="ECO:0007669"/>
    <property type="project" value="UniProtKB-SubCell"/>
</dbReference>
<dbReference type="GO" id="GO:0022857">
    <property type="term" value="F:transmembrane transporter activity"/>
    <property type="evidence" value="ECO:0007669"/>
    <property type="project" value="InterPro"/>
</dbReference>
<dbReference type="GO" id="GO:0007268">
    <property type="term" value="P:chemical synaptic transmission"/>
    <property type="evidence" value="ECO:0007669"/>
    <property type="project" value="InterPro"/>
</dbReference>
<dbReference type="GO" id="GO:0006836">
    <property type="term" value="P:neurotransmitter transport"/>
    <property type="evidence" value="ECO:0007669"/>
    <property type="project" value="UniProtKB-KW"/>
</dbReference>
<dbReference type="CDD" id="cd17439">
    <property type="entry name" value="MFS_SV2A"/>
    <property type="match status" value="1"/>
</dbReference>
<dbReference type="FunFam" id="1.20.1250.20:FF:000009">
    <property type="entry name" value="Synaptic vesicle glycoprotein 2A"/>
    <property type="match status" value="1"/>
</dbReference>
<dbReference type="FunFam" id="2.160.20.80:FF:000001">
    <property type="entry name" value="Synaptic vesicle glycoprotein 2A"/>
    <property type="match status" value="1"/>
</dbReference>
<dbReference type="FunFam" id="1.20.1250.20:FF:000014">
    <property type="entry name" value="synaptic vesicle glycoprotein 2A"/>
    <property type="match status" value="1"/>
</dbReference>
<dbReference type="Gene3D" id="2.160.20.80">
    <property type="entry name" value="E3 ubiquitin-protein ligase SopA"/>
    <property type="match status" value="1"/>
</dbReference>
<dbReference type="Gene3D" id="1.20.1250.20">
    <property type="entry name" value="MFS general substrate transporter like domains"/>
    <property type="match status" value="2"/>
</dbReference>
<dbReference type="InterPro" id="IPR055415">
    <property type="entry name" value="LD_SV2"/>
</dbReference>
<dbReference type="InterPro" id="IPR011701">
    <property type="entry name" value="MFS"/>
</dbReference>
<dbReference type="InterPro" id="IPR020846">
    <property type="entry name" value="MFS_dom"/>
</dbReference>
<dbReference type="InterPro" id="IPR005828">
    <property type="entry name" value="MFS_sugar_transport-like"/>
</dbReference>
<dbReference type="InterPro" id="IPR036259">
    <property type="entry name" value="MFS_trans_sf"/>
</dbReference>
<dbReference type="InterPro" id="IPR005829">
    <property type="entry name" value="Sugar_transporter_CS"/>
</dbReference>
<dbReference type="InterPro" id="IPR022308">
    <property type="entry name" value="SV2"/>
</dbReference>
<dbReference type="NCBIfam" id="TIGR01299">
    <property type="entry name" value="synapt_SV2"/>
    <property type="match status" value="1"/>
</dbReference>
<dbReference type="PANTHER" id="PTHR23511">
    <property type="entry name" value="SYNAPTIC VESICLE GLYCOPROTEIN 2"/>
    <property type="match status" value="1"/>
</dbReference>
<dbReference type="PANTHER" id="PTHR23511:SF11">
    <property type="entry name" value="SYNAPTIC VESICLE GLYCOPROTEIN 2A"/>
    <property type="match status" value="1"/>
</dbReference>
<dbReference type="Pfam" id="PF23894">
    <property type="entry name" value="LD_SV2"/>
    <property type="match status" value="1"/>
</dbReference>
<dbReference type="Pfam" id="PF07690">
    <property type="entry name" value="MFS_1"/>
    <property type="match status" value="1"/>
</dbReference>
<dbReference type="Pfam" id="PF00083">
    <property type="entry name" value="Sugar_tr"/>
    <property type="match status" value="1"/>
</dbReference>
<dbReference type="SUPFAM" id="SSF103473">
    <property type="entry name" value="MFS general substrate transporter"/>
    <property type="match status" value="2"/>
</dbReference>
<dbReference type="SUPFAM" id="SSF141571">
    <property type="entry name" value="Pentapeptide repeat-like"/>
    <property type="match status" value="1"/>
</dbReference>
<dbReference type="PROSITE" id="PS50850">
    <property type="entry name" value="MFS"/>
    <property type="match status" value="1"/>
</dbReference>
<evidence type="ECO:0000250" key="1"/>
<evidence type="ECO:0000250" key="2">
    <source>
        <dbReference type="UniProtKB" id="Q02563"/>
    </source>
</evidence>
<evidence type="ECO:0000250" key="3">
    <source>
        <dbReference type="UniProtKB" id="Q7L0J3"/>
    </source>
</evidence>
<evidence type="ECO:0000250" key="4">
    <source>
        <dbReference type="UniProtKB" id="Q9JIS5"/>
    </source>
</evidence>
<evidence type="ECO:0000255" key="5"/>
<evidence type="ECO:0000256" key="6">
    <source>
        <dbReference type="SAM" id="MobiDB-lite"/>
    </source>
</evidence>
<evidence type="ECO:0000305" key="7"/>